<comment type="catalytic activity">
    <reaction evidence="1">
        <text>L-arginine + H(+) = agmatine + CO2</text>
        <dbReference type="Rhea" id="RHEA:17641"/>
        <dbReference type="ChEBI" id="CHEBI:15378"/>
        <dbReference type="ChEBI" id="CHEBI:16526"/>
        <dbReference type="ChEBI" id="CHEBI:32682"/>
        <dbReference type="ChEBI" id="CHEBI:58145"/>
        <dbReference type="EC" id="4.1.1.19"/>
    </reaction>
</comment>
<comment type="cofactor">
    <cofactor evidence="1">
        <name>pyruvate</name>
        <dbReference type="ChEBI" id="CHEBI:15361"/>
    </cofactor>
    <text evidence="1">Binds 1 pyruvoyl group covalently per subunit.</text>
</comment>
<comment type="similarity">
    <text evidence="1">Belongs to the PdaD family.</text>
</comment>
<sequence>MRQGLVPKKVFFTSGVGRHREMLESFEMALRDAGIEKFNLVTVSSILPPDCEIVQKSEGLPSLYPGEIVFTVMSRNSSNEPSRRIAASIGCAIPKDPVKNFGYLSEHHSYGETEQYAGMYAEKLAENMLFTWTKEKPGKTMNISKTAEVDDEGNWTTVISAAVFIL</sequence>
<feature type="chain" id="PRO_1000068403" description="Pyruvoyl-dependent arginine decarboxylase subunit beta" evidence="1">
    <location>
        <begin position="1"/>
        <end position="44"/>
    </location>
</feature>
<feature type="chain" id="PRO_1000068404" description="Pyruvoyl-dependent arginine decarboxylase subunit alpha" evidence="1">
    <location>
        <begin position="45"/>
        <end position="166"/>
    </location>
</feature>
<feature type="site" description="Cleavage (non-hydrolytic)" evidence="1">
    <location>
        <begin position="44"/>
        <end position="45"/>
    </location>
</feature>
<feature type="modified residue" description="Pyruvic acid (Ser)" evidence="1">
    <location>
        <position position="45"/>
    </location>
</feature>
<proteinExistence type="inferred from homology"/>
<keyword id="KW-0210">Decarboxylase</keyword>
<keyword id="KW-0456">Lyase</keyword>
<keyword id="KW-0670">Pyruvate</keyword>
<keyword id="KW-1185">Reference proteome</keyword>
<name>PDAD_METAR</name>
<reference key="1">
    <citation type="journal article" date="2006" name="Science">
        <title>Genome of rice cluster I archaea -- the key methane producers in the rice rhizosphere.</title>
        <authorList>
            <person name="Erkel C."/>
            <person name="Kube M."/>
            <person name="Reinhardt R."/>
            <person name="Liesack W."/>
        </authorList>
    </citation>
    <scope>NUCLEOTIDE SEQUENCE [LARGE SCALE GENOMIC DNA]</scope>
    <source>
        <strain>DSM 22066 / NBRC 105507 / MRE50</strain>
    </source>
</reference>
<organism>
    <name type="scientific">Methanocella arvoryzae (strain DSM 22066 / NBRC 105507 / MRE50)</name>
    <dbReference type="NCBI Taxonomy" id="351160"/>
    <lineage>
        <taxon>Archaea</taxon>
        <taxon>Methanobacteriati</taxon>
        <taxon>Methanobacteriota</taxon>
        <taxon>Stenosarchaea group</taxon>
        <taxon>Methanomicrobia</taxon>
        <taxon>Methanocellales</taxon>
        <taxon>Methanocellaceae</taxon>
        <taxon>Methanocella</taxon>
    </lineage>
</organism>
<protein>
    <recommendedName>
        <fullName evidence="1">Pyruvoyl-dependent arginine decarboxylase</fullName>
        <shortName evidence="1">PvlArgDC</shortName>
        <ecNumber evidence="1">4.1.1.19</ecNumber>
    </recommendedName>
    <component>
        <recommendedName>
            <fullName evidence="1">Pyruvoyl-dependent arginine decarboxylase subunit beta</fullName>
        </recommendedName>
    </component>
    <component>
        <recommendedName>
            <fullName evidence="1">Pyruvoyl-dependent arginine decarboxylase subunit alpha</fullName>
        </recommendedName>
    </component>
</protein>
<evidence type="ECO:0000255" key="1">
    <source>
        <dbReference type="HAMAP-Rule" id="MF_01404"/>
    </source>
</evidence>
<accession>Q0W1C7</accession>
<dbReference type="EC" id="4.1.1.19" evidence="1"/>
<dbReference type="EMBL" id="AM114193">
    <property type="protein sequence ID" value="CAJ37816.1"/>
    <property type="molecule type" value="Genomic_DNA"/>
</dbReference>
<dbReference type="RefSeq" id="WP_012034772.1">
    <property type="nucleotide sequence ID" value="NC_009464.1"/>
</dbReference>
<dbReference type="SMR" id="Q0W1C7"/>
<dbReference type="STRING" id="351160.RRC25"/>
<dbReference type="GeneID" id="5143395"/>
<dbReference type="KEGG" id="rci:RRC25"/>
<dbReference type="PATRIC" id="fig|351160.9.peg.468"/>
<dbReference type="eggNOG" id="arCOG04490">
    <property type="taxonomic scope" value="Archaea"/>
</dbReference>
<dbReference type="OrthoDB" id="30748at2157"/>
<dbReference type="Proteomes" id="UP000000663">
    <property type="component" value="Chromosome"/>
</dbReference>
<dbReference type="GO" id="GO:0008792">
    <property type="term" value="F:arginine decarboxylase activity"/>
    <property type="evidence" value="ECO:0007669"/>
    <property type="project" value="UniProtKB-UniRule"/>
</dbReference>
<dbReference type="GO" id="GO:0006527">
    <property type="term" value="P:arginine catabolic process"/>
    <property type="evidence" value="ECO:0007669"/>
    <property type="project" value="InterPro"/>
</dbReference>
<dbReference type="Gene3D" id="3.30.60.30">
    <property type="match status" value="1"/>
</dbReference>
<dbReference type="Gene3D" id="3.50.20.10">
    <property type="entry name" value="Pyruvoyl-Dependent Histidine Decarboxylase, subunit B"/>
    <property type="match status" value="1"/>
</dbReference>
<dbReference type="HAMAP" id="MF_01404">
    <property type="entry name" value="PvlArgDC"/>
    <property type="match status" value="1"/>
</dbReference>
<dbReference type="InterPro" id="IPR016104">
    <property type="entry name" value="Pyr-dep_his/arg-deCO2ase"/>
</dbReference>
<dbReference type="InterPro" id="IPR016105">
    <property type="entry name" value="Pyr-dep_his/arg-deCO2ase_sand"/>
</dbReference>
<dbReference type="InterPro" id="IPR002724">
    <property type="entry name" value="Pyruvoyl-dep_arg_deCO2ase"/>
</dbReference>
<dbReference type="NCBIfam" id="NF009064">
    <property type="entry name" value="PRK12398.1"/>
    <property type="match status" value="1"/>
</dbReference>
<dbReference type="NCBIfam" id="TIGR00286">
    <property type="entry name" value="pyruvoyl-dependent arginine decarboxylase"/>
    <property type="match status" value="1"/>
</dbReference>
<dbReference type="PANTHER" id="PTHR40438">
    <property type="entry name" value="PYRUVOYL-DEPENDENT ARGININE DECARBOXYLASE"/>
    <property type="match status" value="1"/>
</dbReference>
<dbReference type="PANTHER" id="PTHR40438:SF1">
    <property type="entry name" value="PYRUVOYL-DEPENDENT ARGININE DECARBOXYLASE"/>
    <property type="match status" value="1"/>
</dbReference>
<dbReference type="Pfam" id="PF01862">
    <property type="entry name" value="PvlArgDC"/>
    <property type="match status" value="1"/>
</dbReference>
<dbReference type="PIRSF" id="PIRSF005216">
    <property type="entry name" value="Pyruvoyl-dep_arg_deCO2ase"/>
    <property type="match status" value="1"/>
</dbReference>
<dbReference type="SFLD" id="SFLDG01170">
    <property type="entry name" value="Pyruvoyl-dependent_arginine_de"/>
    <property type="match status" value="1"/>
</dbReference>
<dbReference type="SFLD" id="SFLDS00055">
    <property type="entry name" value="Pyruvoyl-Dependent_Histidine/A"/>
    <property type="match status" value="1"/>
</dbReference>
<dbReference type="SUPFAM" id="SSF56271">
    <property type="entry name" value="Pyruvoyl-dependent histidine and arginine decarboxylases"/>
    <property type="match status" value="1"/>
</dbReference>
<gene>
    <name evidence="1" type="primary">pdaD</name>
    <name type="ordered locus">UNCMA_04430</name>
    <name type="ORF">RRC25</name>
</gene>